<dbReference type="EC" id="2.7.1.130" evidence="1"/>
<dbReference type="EMBL" id="CP000937">
    <property type="protein sequence ID" value="ABZ87236.1"/>
    <property type="molecule type" value="Genomic_DNA"/>
</dbReference>
<dbReference type="SMR" id="B0TWX8"/>
<dbReference type="KEGG" id="fph:Fphi_1012"/>
<dbReference type="eggNOG" id="COG1663">
    <property type="taxonomic scope" value="Bacteria"/>
</dbReference>
<dbReference type="HOGENOM" id="CLU_038816_2_0_6"/>
<dbReference type="UniPathway" id="UPA00359">
    <property type="reaction ID" value="UER00482"/>
</dbReference>
<dbReference type="GO" id="GO:0005886">
    <property type="term" value="C:plasma membrane"/>
    <property type="evidence" value="ECO:0007669"/>
    <property type="project" value="TreeGrafter"/>
</dbReference>
<dbReference type="GO" id="GO:0005524">
    <property type="term" value="F:ATP binding"/>
    <property type="evidence" value="ECO:0007669"/>
    <property type="project" value="UniProtKB-UniRule"/>
</dbReference>
<dbReference type="GO" id="GO:0009029">
    <property type="term" value="F:tetraacyldisaccharide 4'-kinase activity"/>
    <property type="evidence" value="ECO:0007669"/>
    <property type="project" value="UniProtKB-UniRule"/>
</dbReference>
<dbReference type="GO" id="GO:0009245">
    <property type="term" value="P:lipid A biosynthetic process"/>
    <property type="evidence" value="ECO:0007669"/>
    <property type="project" value="UniProtKB-UniRule"/>
</dbReference>
<dbReference type="GO" id="GO:0009244">
    <property type="term" value="P:lipopolysaccharide core region biosynthetic process"/>
    <property type="evidence" value="ECO:0007669"/>
    <property type="project" value="TreeGrafter"/>
</dbReference>
<dbReference type="HAMAP" id="MF_00409">
    <property type="entry name" value="LpxK"/>
    <property type="match status" value="1"/>
</dbReference>
<dbReference type="InterPro" id="IPR003758">
    <property type="entry name" value="LpxK"/>
</dbReference>
<dbReference type="InterPro" id="IPR027417">
    <property type="entry name" value="P-loop_NTPase"/>
</dbReference>
<dbReference type="NCBIfam" id="TIGR00682">
    <property type="entry name" value="lpxK"/>
    <property type="match status" value="1"/>
</dbReference>
<dbReference type="PANTHER" id="PTHR42724">
    <property type="entry name" value="TETRAACYLDISACCHARIDE 4'-KINASE"/>
    <property type="match status" value="1"/>
</dbReference>
<dbReference type="PANTHER" id="PTHR42724:SF1">
    <property type="entry name" value="TETRAACYLDISACCHARIDE 4'-KINASE, MITOCHONDRIAL-RELATED"/>
    <property type="match status" value="1"/>
</dbReference>
<dbReference type="Pfam" id="PF02606">
    <property type="entry name" value="LpxK"/>
    <property type="match status" value="1"/>
</dbReference>
<dbReference type="SUPFAM" id="SSF52540">
    <property type="entry name" value="P-loop containing nucleoside triphosphate hydrolases"/>
    <property type="match status" value="1"/>
</dbReference>
<name>LPXK_FRAP2</name>
<sequence length="322" mass="36337">MIDNIWYKPQLGILSYILSPIAFIFSKIAHNRKIRLQNNQYKSKIPVIIVGNISVGGTGKTPVVRMFANQYLEQGKKPVIISRGYGAKAEKYPFEVDSKTPASVCGDEPAMLFDALGGKVPIVISPHRVDSVKYIEKNYPDADVIISDDGLQHYKLARTKEVVVVDASRMFGNGLCLPAGPLREPVERLKSVDQIIAIGNLDNQNYSELLNYNSNIVRAKIKATKFVNLVTKQSILIDSFYGKSIDAVAGIGNPDKFFSSLDELGVNIYHEHIFRDHHKYTPKDFEHFDPEQIVIMTYKDAIKCKDFAKSNWWYLDIALEFC</sequence>
<comment type="function">
    <text evidence="1">Transfers the gamma-phosphate of ATP to the 4'-position of a tetraacyldisaccharide 1-phosphate intermediate (termed DS-1-P) to form tetraacyldisaccharide 1,4'-bis-phosphate (lipid IVA).</text>
</comment>
<comment type="catalytic activity">
    <reaction evidence="1">
        <text>a lipid A disaccharide + ATP = a lipid IVA + ADP + H(+)</text>
        <dbReference type="Rhea" id="RHEA:67840"/>
        <dbReference type="ChEBI" id="CHEBI:15378"/>
        <dbReference type="ChEBI" id="CHEBI:30616"/>
        <dbReference type="ChEBI" id="CHEBI:176343"/>
        <dbReference type="ChEBI" id="CHEBI:176425"/>
        <dbReference type="ChEBI" id="CHEBI:456216"/>
        <dbReference type="EC" id="2.7.1.130"/>
    </reaction>
</comment>
<comment type="pathway">
    <text evidence="1">Glycolipid biosynthesis; lipid IV(A) biosynthesis; lipid IV(A) from (3R)-3-hydroxytetradecanoyl-[acyl-carrier-protein] and UDP-N-acetyl-alpha-D-glucosamine: step 6/6.</text>
</comment>
<comment type="similarity">
    <text evidence="1">Belongs to the LpxK family.</text>
</comment>
<gene>
    <name evidence="1" type="primary">lpxK</name>
    <name type="ordered locus">Fphi_1012</name>
</gene>
<reference key="1">
    <citation type="submission" date="2007-12" db="EMBL/GenBank/DDBJ databases">
        <title>Complete sequence of chromosome of Francisella philomiragia subsp. philomiragia ATCC 25017.</title>
        <authorList>
            <consortium name="US DOE Joint Genome Institute"/>
            <person name="Copeland A."/>
            <person name="Lucas S."/>
            <person name="Lapidus A."/>
            <person name="Barry K."/>
            <person name="Detter J.C."/>
            <person name="Glavina del Rio T."/>
            <person name="Hammon N."/>
            <person name="Israni S."/>
            <person name="Dalin E."/>
            <person name="Tice H."/>
            <person name="Pitluck S."/>
            <person name="Chain P."/>
            <person name="Malfatti S."/>
            <person name="Shin M."/>
            <person name="Vergez L."/>
            <person name="Schmutz J."/>
            <person name="Larimer F."/>
            <person name="Land M."/>
            <person name="Hauser L."/>
            <person name="Richardson P."/>
        </authorList>
    </citation>
    <scope>NUCLEOTIDE SEQUENCE [LARGE SCALE GENOMIC DNA]</scope>
    <source>
        <strain>ATCC 25017 / CCUG 19701 / FSC 153 / O#319-036</strain>
    </source>
</reference>
<organism>
    <name type="scientific">Francisella philomiragia subsp. philomiragia (strain ATCC 25017 / CCUG 19701 / FSC 153 / O#319-036)</name>
    <dbReference type="NCBI Taxonomy" id="484022"/>
    <lineage>
        <taxon>Bacteria</taxon>
        <taxon>Pseudomonadati</taxon>
        <taxon>Pseudomonadota</taxon>
        <taxon>Gammaproteobacteria</taxon>
        <taxon>Thiotrichales</taxon>
        <taxon>Francisellaceae</taxon>
        <taxon>Francisella</taxon>
    </lineage>
</organism>
<evidence type="ECO:0000255" key="1">
    <source>
        <dbReference type="HAMAP-Rule" id="MF_00409"/>
    </source>
</evidence>
<proteinExistence type="inferred from homology"/>
<accession>B0TWX8</accession>
<protein>
    <recommendedName>
        <fullName evidence="1">Tetraacyldisaccharide 4'-kinase</fullName>
        <ecNumber evidence="1">2.7.1.130</ecNumber>
    </recommendedName>
    <alternativeName>
        <fullName evidence="1">Lipid A 4'-kinase</fullName>
    </alternativeName>
</protein>
<feature type="chain" id="PRO_1000080467" description="Tetraacyldisaccharide 4'-kinase">
    <location>
        <begin position="1"/>
        <end position="322"/>
    </location>
</feature>
<feature type="binding site" evidence="1">
    <location>
        <begin position="54"/>
        <end position="61"/>
    </location>
    <ligand>
        <name>ATP</name>
        <dbReference type="ChEBI" id="CHEBI:30616"/>
    </ligand>
</feature>
<keyword id="KW-0067">ATP-binding</keyword>
<keyword id="KW-0418">Kinase</keyword>
<keyword id="KW-0441">Lipid A biosynthesis</keyword>
<keyword id="KW-0444">Lipid biosynthesis</keyword>
<keyword id="KW-0443">Lipid metabolism</keyword>
<keyword id="KW-0547">Nucleotide-binding</keyword>
<keyword id="KW-0808">Transferase</keyword>